<dbReference type="EC" id="3.2.1.17"/>
<dbReference type="EMBL" id="M95099">
    <property type="protein sequence ID" value="AAC37312.1"/>
    <property type="molecule type" value="Unassigned_DNA"/>
</dbReference>
<dbReference type="PIR" id="F34277">
    <property type="entry name" value="F34277"/>
</dbReference>
<dbReference type="RefSeq" id="NP_776529.1">
    <property type="nucleotide sequence ID" value="NM_174104.2"/>
</dbReference>
<dbReference type="SMR" id="Q06284"/>
<dbReference type="FunCoup" id="Q06284">
    <property type="interactions" value="17"/>
</dbReference>
<dbReference type="STRING" id="9913.ENSBTAP00000027399"/>
<dbReference type="CAZy" id="GH22">
    <property type="family name" value="Glycoside Hydrolase Family 22"/>
</dbReference>
<dbReference type="PaxDb" id="9913-ENSBTAP00000027399"/>
<dbReference type="Ensembl" id="ENSBTAT00000027399.6">
    <property type="protein sequence ID" value="ENSBTAP00000027399.5"/>
    <property type="gene ID" value="ENSBTAG00000046628.2"/>
</dbReference>
<dbReference type="GeneID" id="281289"/>
<dbReference type="KEGG" id="bta:281289"/>
<dbReference type="CTD" id="77397"/>
<dbReference type="VEuPathDB" id="HostDB:ENSBTAG00000046628"/>
<dbReference type="eggNOG" id="ENOG502S1S1">
    <property type="taxonomic scope" value="Eukaryota"/>
</dbReference>
<dbReference type="GeneTree" id="ENSGT00940000153832"/>
<dbReference type="HOGENOM" id="CLU_111620_0_1_1"/>
<dbReference type="InParanoid" id="Q06284"/>
<dbReference type="OMA" id="HCFRRRH"/>
<dbReference type="OrthoDB" id="9698384at2759"/>
<dbReference type="TreeFam" id="TF324882"/>
<dbReference type="Reactome" id="R-BTA-6798695">
    <property type="pathway name" value="Neutrophil degranulation"/>
</dbReference>
<dbReference type="Reactome" id="R-BTA-6803157">
    <property type="pathway name" value="Antimicrobial peptides"/>
</dbReference>
<dbReference type="Proteomes" id="UP000009136">
    <property type="component" value="Chromosome 5"/>
</dbReference>
<dbReference type="Bgee" id="ENSBTAG00000046628">
    <property type="expression patterns" value="Expressed in urinary bladder and 46 other cell types or tissues"/>
</dbReference>
<dbReference type="GO" id="GO:0003796">
    <property type="term" value="F:lysozyme activity"/>
    <property type="evidence" value="ECO:0000318"/>
    <property type="project" value="GO_Central"/>
</dbReference>
<dbReference type="GO" id="GO:0050829">
    <property type="term" value="P:defense response to Gram-negative bacterium"/>
    <property type="evidence" value="ECO:0000318"/>
    <property type="project" value="GO_Central"/>
</dbReference>
<dbReference type="GO" id="GO:0050830">
    <property type="term" value="P:defense response to Gram-positive bacterium"/>
    <property type="evidence" value="ECO:0000318"/>
    <property type="project" value="GO_Central"/>
</dbReference>
<dbReference type="GO" id="GO:0007586">
    <property type="term" value="P:digestion"/>
    <property type="evidence" value="ECO:0007669"/>
    <property type="project" value="UniProtKB-KW"/>
</dbReference>
<dbReference type="GO" id="GO:0031640">
    <property type="term" value="P:killing of cells of another organism"/>
    <property type="evidence" value="ECO:0007669"/>
    <property type="project" value="UniProtKB-KW"/>
</dbReference>
<dbReference type="CDD" id="cd16897">
    <property type="entry name" value="LYZ_C"/>
    <property type="match status" value="1"/>
</dbReference>
<dbReference type="FunFam" id="1.10.530.10:FF:000001">
    <property type="entry name" value="Lysozyme C"/>
    <property type="match status" value="1"/>
</dbReference>
<dbReference type="Gene3D" id="1.10.530.10">
    <property type="match status" value="1"/>
</dbReference>
<dbReference type="InterPro" id="IPR001916">
    <property type="entry name" value="Glyco_hydro_22"/>
</dbReference>
<dbReference type="InterPro" id="IPR019799">
    <property type="entry name" value="Glyco_hydro_22_CS"/>
</dbReference>
<dbReference type="InterPro" id="IPR000974">
    <property type="entry name" value="Glyco_hydro_22_lys"/>
</dbReference>
<dbReference type="InterPro" id="IPR023346">
    <property type="entry name" value="Lysozyme-like_dom_sf"/>
</dbReference>
<dbReference type="PANTHER" id="PTHR11407">
    <property type="entry name" value="LYSOZYME C"/>
    <property type="match status" value="1"/>
</dbReference>
<dbReference type="PANTHER" id="PTHR11407:SF28">
    <property type="entry name" value="LYSOZYME C"/>
    <property type="match status" value="1"/>
</dbReference>
<dbReference type="Pfam" id="PF00062">
    <property type="entry name" value="Lys"/>
    <property type="match status" value="1"/>
</dbReference>
<dbReference type="PRINTS" id="PR00137">
    <property type="entry name" value="LYSOZYME"/>
</dbReference>
<dbReference type="PRINTS" id="PR00135">
    <property type="entry name" value="LYZLACT"/>
</dbReference>
<dbReference type="SMART" id="SM00263">
    <property type="entry name" value="LYZ1"/>
    <property type="match status" value="1"/>
</dbReference>
<dbReference type="SUPFAM" id="SSF53955">
    <property type="entry name" value="Lysozyme-like"/>
    <property type="match status" value="1"/>
</dbReference>
<dbReference type="PROSITE" id="PS00128">
    <property type="entry name" value="GLYCOSYL_HYDROL_F22_1"/>
    <property type="match status" value="1"/>
</dbReference>
<dbReference type="PROSITE" id="PS51348">
    <property type="entry name" value="GLYCOSYL_HYDROL_F22_2"/>
    <property type="match status" value="1"/>
</dbReference>
<accession>Q06284</accession>
<sequence>MKALIILGFLFLSVAVQGKVFERCELARTLKKLGLDGYKGVSLANWLCLTKWESSYNTKATNYNPSSESTDYGIFQINSKWWCNDGKTPNAVDGCHVSCSELMENDIAKAVACAKHIVSEQGITAWVAWKSHCRDHDVSSYVQGCTL</sequence>
<organism>
    <name type="scientific">Bos taurus</name>
    <name type="common">Bovine</name>
    <dbReference type="NCBI Taxonomy" id="9913"/>
    <lineage>
        <taxon>Eukaryota</taxon>
        <taxon>Metazoa</taxon>
        <taxon>Chordata</taxon>
        <taxon>Craniata</taxon>
        <taxon>Vertebrata</taxon>
        <taxon>Euteleostomi</taxon>
        <taxon>Mammalia</taxon>
        <taxon>Eutheria</taxon>
        <taxon>Laurasiatheria</taxon>
        <taxon>Artiodactyla</taxon>
        <taxon>Ruminantia</taxon>
        <taxon>Pecora</taxon>
        <taxon>Bovidae</taxon>
        <taxon>Bovinae</taxon>
        <taxon>Bos</taxon>
    </lineage>
</organism>
<reference key="1">
    <citation type="journal article" date="1993" name="J. Mol. Evol.">
        <title>Characterization of the cow stomach lysozyme genes: repetitive DNA and concerted evolution.</title>
        <authorList>
            <person name="Irwin D.M."/>
            <person name="White R.T."/>
            <person name="Wilson A.C."/>
        </authorList>
    </citation>
    <scope>NUCLEOTIDE SEQUENCE</scope>
</reference>
<proteinExistence type="evidence at transcript level"/>
<comment type="function">
    <text>Lysozymes have primarily a bacteriolytic function; those in tissues and body fluids are associated with the monocyte-macrophage system and enhance the activity of immunoagents.</text>
</comment>
<comment type="catalytic activity">
    <reaction>
        <text>Hydrolysis of (1-&gt;4)-beta-linkages between N-acetylmuramic acid and N-acetyl-D-glucosamine residues in a peptidoglycan and between N-acetyl-D-glucosamine residues in chitodextrins.</text>
        <dbReference type="EC" id="3.2.1.17"/>
    </reaction>
</comment>
<comment type="subunit">
    <text>Monomer.</text>
</comment>
<comment type="tissue specificity">
    <text>Stomach-specific.</text>
</comment>
<comment type="miscellaneous">
    <text>Lysozyme C is capable of both hydrolysis and transglycosylation; it also shows a slight esterase activity. It acts rapidly on both peptide-substituted and unsubstituted peptidoglycan, and slowly on chitin oligosaccharides.</text>
</comment>
<comment type="miscellaneous">
    <text>The ruminant gastric lysozymes, which digest symbiotic bacteria coming with cud from the rumen, are much more resistant to inactivation by pepsin than are other lysozymes.</text>
</comment>
<comment type="similarity">
    <text evidence="2">Belongs to the glycosyl hydrolase 22 family.</text>
</comment>
<evidence type="ECO:0000250" key="1"/>
<evidence type="ECO:0000255" key="2">
    <source>
        <dbReference type="PROSITE-ProRule" id="PRU00680"/>
    </source>
</evidence>
<protein>
    <recommendedName>
        <fullName>Lysozyme C-3</fullName>
        <ecNumber>3.2.1.17</ecNumber>
    </recommendedName>
    <alternativeName>
        <fullName>1,4-beta-N-acetylmuramidase C</fullName>
    </alternativeName>
</protein>
<feature type="signal peptide" evidence="1">
    <location>
        <begin position="1"/>
        <end position="18"/>
    </location>
</feature>
<feature type="chain" id="PRO_0000018456" description="Lysozyme C-3">
    <location>
        <begin position="19"/>
        <end position="147"/>
    </location>
</feature>
<feature type="domain" description="C-type lysozyme" evidence="2">
    <location>
        <begin position="19"/>
        <end position="147"/>
    </location>
</feature>
<feature type="active site" evidence="2">
    <location>
        <position position="53"/>
    </location>
</feature>
<feature type="active site" evidence="2">
    <location>
        <position position="71"/>
    </location>
</feature>
<feature type="disulfide bond" evidence="2">
    <location>
        <begin position="24"/>
        <end position="145"/>
    </location>
</feature>
<feature type="disulfide bond" evidence="2">
    <location>
        <begin position="48"/>
        <end position="133"/>
    </location>
</feature>
<feature type="disulfide bond" evidence="2">
    <location>
        <begin position="83"/>
        <end position="99"/>
    </location>
</feature>
<feature type="disulfide bond" evidence="2">
    <location>
        <begin position="95"/>
        <end position="113"/>
    </location>
</feature>
<name>LYSC3_BOVIN</name>
<gene>
    <name type="primary">LYZ3</name>
</gene>
<keyword id="KW-0929">Antimicrobial</keyword>
<keyword id="KW-0081">Bacteriolytic enzyme</keyword>
<keyword id="KW-0222">Digestion</keyword>
<keyword id="KW-1015">Disulfide bond</keyword>
<keyword id="KW-0326">Glycosidase</keyword>
<keyword id="KW-0378">Hydrolase</keyword>
<keyword id="KW-1185">Reference proteome</keyword>
<keyword id="KW-0732">Signal</keyword>